<proteinExistence type="evidence at transcript level"/>
<dbReference type="EMBL" id="AF435962">
    <property type="protein sequence ID" value="AAL31972.1"/>
    <property type="molecule type" value="mRNA"/>
</dbReference>
<dbReference type="EMBL" id="AE013599">
    <property type="protein sequence ID" value="AAF46869.1"/>
    <property type="molecule type" value="Genomic_DNA"/>
</dbReference>
<dbReference type="EMBL" id="AY060712">
    <property type="protein sequence ID" value="AAL28260.1"/>
    <property type="molecule type" value="mRNA"/>
</dbReference>
<dbReference type="RefSeq" id="NP_611691.1">
    <property type="nucleotide sequence ID" value="NM_137847.3"/>
</dbReference>
<dbReference type="SMR" id="Q8WTC1"/>
<dbReference type="BioGRID" id="63202">
    <property type="interactions" value="3"/>
</dbReference>
<dbReference type="FunCoup" id="Q8WTC1">
    <property type="interactions" value="935"/>
</dbReference>
<dbReference type="IntAct" id="Q8WTC1">
    <property type="interactions" value="28"/>
</dbReference>
<dbReference type="STRING" id="7227.FBpp0071771"/>
<dbReference type="PaxDb" id="7227-FBpp0071771"/>
<dbReference type="DNASU" id="37587"/>
<dbReference type="EnsemblMetazoa" id="FBtr0071860">
    <property type="protein sequence ID" value="FBpp0071771"/>
    <property type="gene ID" value="FBgn0026261"/>
</dbReference>
<dbReference type="GeneID" id="37587"/>
<dbReference type="KEGG" id="dme:Dmel_CG4207"/>
<dbReference type="UCSC" id="CG4207-RA">
    <property type="organism name" value="d. melanogaster"/>
</dbReference>
<dbReference type="AGR" id="FB:FBgn0026261"/>
<dbReference type="CTD" id="37587"/>
<dbReference type="FlyBase" id="FBgn0026261">
    <property type="gene designation" value="bonsai"/>
</dbReference>
<dbReference type="VEuPathDB" id="VectorBase:FBgn0026261"/>
<dbReference type="eggNOG" id="KOG2815">
    <property type="taxonomic scope" value="Eukaryota"/>
</dbReference>
<dbReference type="GeneTree" id="ENSGT00390000001737"/>
<dbReference type="HOGENOM" id="CLU_1009058_0_0_1"/>
<dbReference type="InParanoid" id="Q8WTC1"/>
<dbReference type="OMA" id="QEQISCD"/>
<dbReference type="OrthoDB" id="441444at2759"/>
<dbReference type="PhylomeDB" id="Q8WTC1"/>
<dbReference type="Reactome" id="R-DME-5389840">
    <property type="pathway name" value="Mitochondrial translation elongation"/>
</dbReference>
<dbReference type="Reactome" id="R-DME-5419276">
    <property type="pathway name" value="Mitochondrial translation termination"/>
</dbReference>
<dbReference type="BioGRID-ORCS" id="37587">
    <property type="hits" value="0 hits in 1 CRISPR screen"/>
</dbReference>
<dbReference type="ChiTaRS" id="bonsai">
    <property type="organism name" value="fly"/>
</dbReference>
<dbReference type="GenomeRNAi" id="37587"/>
<dbReference type="PRO" id="PR:Q8WTC1"/>
<dbReference type="Proteomes" id="UP000000803">
    <property type="component" value="Chromosome 2R"/>
</dbReference>
<dbReference type="Bgee" id="FBgn0026261">
    <property type="expression patterns" value="Expressed in egg chamber and 116 other cell types or tissues"/>
</dbReference>
<dbReference type="GO" id="GO:0005763">
    <property type="term" value="C:mitochondrial small ribosomal subunit"/>
    <property type="evidence" value="ECO:0000250"/>
    <property type="project" value="UniProtKB"/>
</dbReference>
<dbReference type="GO" id="GO:0005739">
    <property type="term" value="C:mitochondrion"/>
    <property type="evidence" value="ECO:0000314"/>
    <property type="project" value="FlyBase"/>
</dbReference>
<dbReference type="GO" id="GO:0003735">
    <property type="term" value="F:structural constituent of ribosome"/>
    <property type="evidence" value="ECO:0000250"/>
    <property type="project" value="UniProtKB"/>
</dbReference>
<dbReference type="GO" id="GO:0032543">
    <property type="term" value="P:mitochondrial translation"/>
    <property type="evidence" value="ECO:0000250"/>
    <property type="project" value="UniProtKB"/>
</dbReference>
<dbReference type="GO" id="GO:0040008">
    <property type="term" value="P:regulation of growth"/>
    <property type="evidence" value="ECO:0000315"/>
    <property type="project" value="UniProtKB"/>
</dbReference>
<dbReference type="CDD" id="cd00353">
    <property type="entry name" value="Ribosomal_S15p_S13e"/>
    <property type="match status" value="1"/>
</dbReference>
<dbReference type="FunFam" id="1.10.287.10:FF:000015">
    <property type="entry name" value="Mitochondrial ribosomal protein S15"/>
    <property type="match status" value="1"/>
</dbReference>
<dbReference type="Gene3D" id="1.10.287.10">
    <property type="entry name" value="S15/NS1, RNA-binding"/>
    <property type="match status" value="1"/>
</dbReference>
<dbReference type="HAMAP" id="MF_01343_B">
    <property type="entry name" value="Ribosomal_uS15_B"/>
    <property type="match status" value="1"/>
</dbReference>
<dbReference type="InterPro" id="IPR000589">
    <property type="entry name" value="Ribosomal_uS15"/>
</dbReference>
<dbReference type="InterPro" id="IPR005290">
    <property type="entry name" value="Ribosomal_uS15_bac-type"/>
</dbReference>
<dbReference type="InterPro" id="IPR009068">
    <property type="entry name" value="uS15_NS1_RNA-bd_sf"/>
</dbReference>
<dbReference type="InterPro" id="IPR052137">
    <property type="entry name" value="uS15_ribosomal"/>
</dbReference>
<dbReference type="PANTHER" id="PTHR46685">
    <property type="entry name" value="28S RIBOSOMAL PROTEIN S15, MITOCHONDRIAL"/>
    <property type="match status" value="1"/>
</dbReference>
<dbReference type="PANTHER" id="PTHR46685:SF1">
    <property type="entry name" value="SMALL RIBOSOMAL SUBUNIT PROTEIN US15M"/>
    <property type="match status" value="1"/>
</dbReference>
<dbReference type="Pfam" id="PF00312">
    <property type="entry name" value="Ribosomal_S15"/>
    <property type="match status" value="1"/>
</dbReference>
<dbReference type="SMART" id="SM01387">
    <property type="entry name" value="Ribosomal_S15"/>
    <property type="match status" value="1"/>
</dbReference>
<dbReference type="SUPFAM" id="SSF47060">
    <property type="entry name" value="S15/NS1 RNA-binding domain"/>
    <property type="match status" value="1"/>
</dbReference>
<reference key="1">
    <citation type="journal article" date="2003" name="Dev. Biol.">
        <title>Bonsai, a ribosomal protein S15 homolog, involved in gut mitochondrial activity and systemic growth.</title>
        <authorList>
            <person name="Galloni M."/>
        </authorList>
    </citation>
    <scope>NUCLEOTIDE SEQUENCE</scope>
    <scope>FUNCTION</scope>
    <scope>SUBCELLULAR LOCATION</scope>
    <scope>TISSUE SPECIFICITY</scope>
    <scope>DISRUPTION PHENOTYPE</scope>
    <source>
        <tissue>Embryo</tissue>
    </source>
</reference>
<reference key="2">
    <citation type="journal article" date="2000" name="Science">
        <title>The genome sequence of Drosophila melanogaster.</title>
        <authorList>
            <person name="Adams M.D."/>
            <person name="Celniker S.E."/>
            <person name="Holt R.A."/>
            <person name="Evans C.A."/>
            <person name="Gocayne J.D."/>
            <person name="Amanatides P.G."/>
            <person name="Scherer S.E."/>
            <person name="Li P.W."/>
            <person name="Hoskins R.A."/>
            <person name="Galle R.F."/>
            <person name="George R.A."/>
            <person name="Lewis S.E."/>
            <person name="Richards S."/>
            <person name="Ashburner M."/>
            <person name="Henderson S.N."/>
            <person name="Sutton G.G."/>
            <person name="Wortman J.R."/>
            <person name="Yandell M.D."/>
            <person name="Zhang Q."/>
            <person name="Chen L.X."/>
            <person name="Brandon R.C."/>
            <person name="Rogers Y.-H.C."/>
            <person name="Blazej R.G."/>
            <person name="Champe M."/>
            <person name="Pfeiffer B.D."/>
            <person name="Wan K.H."/>
            <person name="Doyle C."/>
            <person name="Baxter E.G."/>
            <person name="Helt G."/>
            <person name="Nelson C.R."/>
            <person name="Miklos G.L.G."/>
            <person name="Abril J.F."/>
            <person name="Agbayani A."/>
            <person name="An H.-J."/>
            <person name="Andrews-Pfannkoch C."/>
            <person name="Baldwin D."/>
            <person name="Ballew R.M."/>
            <person name="Basu A."/>
            <person name="Baxendale J."/>
            <person name="Bayraktaroglu L."/>
            <person name="Beasley E.M."/>
            <person name="Beeson K.Y."/>
            <person name="Benos P.V."/>
            <person name="Berman B.P."/>
            <person name="Bhandari D."/>
            <person name="Bolshakov S."/>
            <person name="Borkova D."/>
            <person name="Botchan M.R."/>
            <person name="Bouck J."/>
            <person name="Brokstein P."/>
            <person name="Brottier P."/>
            <person name="Burtis K.C."/>
            <person name="Busam D.A."/>
            <person name="Butler H."/>
            <person name="Cadieu E."/>
            <person name="Center A."/>
            <person name="Chandra I."/>
            <person name="Cherry J.M."/>
            <person name="Cawley S."/>
            <person name="Dahlke C."/>
            <person name="Davenport L.B."/>
            <person name="Davies P."/>
            <person name="de Pablos B."/>
            <person name="Delcher A."/>
            <person name="Deng Z."/>
            <person name="Mays A.D."/>
            <person name="Dew I."/>
            <person name="Dietz S.M."/>
            <person name="Dodson K."/>
            <person name="Doup L.E."/>
            <person name="Downes M."/>
            <person name="Dugan-Rocha S."/>
            <person name="Dunkov B.C."/>
            <person name="Dunn P."/>
            <person name="Durbin K.J."/>
            <person name="Evangelista C.C."/>
            <person name="Ferraz C."/>
            <person name="Ferriera S."/>
            <person name="Fleischmann W."/>
            <person name="Fosler C."/>
            <person name="Gabrielian A.E."/>
            <person name="Garg N.S."/>
            <person name="Gelbart W.M."/>
            <person name="Glasser K."/>
            <person name="Glodek A."/>
            <person name="Gong F."/>
            <person name="Gorrell J.H."/>
            <person name="Gu Z."/>
            <person name="Guan P."/>
            <person name="Harris M."/>
            <person name="Harris N.L."/>
            <person name="Harvey D.A."/>
            <person name="Heiman T.J."/>
            <person name="Hernandez J.R."/>
            <person name="Houck J."/>
            <person name="Hostin D."/>
            <person name="Houston K.A."/>
            <person name="Howland T.J."/>
            <person name="Wei M.-H."/>
            <person name="Ibegwam C."/>
            <person name="Jalali M."/>
            <person name="Kalush F."/>
            <person name="Karpen G.H."/>
            <person name="Ke Z."/>
            <person name="Kennison J.A."/>
            <person name="Ketchum K.A."/>
            <person name="Kimmel B.E."/>
            <person name="Kodira C.D."/>
            <person name="Kraft C.L."/>
            <person name="Kravitz S."/>
            <person name="Kulp D."/>
            <person name="Lai Z."/>
            <person name="Lasko P."/>
            <person name="Lei Y."/>
            <person name="Levitsky A.A."/>
            <person name="Li J.H."/>
            <person name="Li Z."/>
            <person name="Liang Y."/>
            <person name="Lin X."/>
            <person name="Liu X."/>
            <person name="Mattei B."/>
            <person name="McIntosh T.C."/>
            <person name="McLeod M.P."/>
            <person name="McPherson D."/>
            <person name="Merkulov G."/>
            <person name="Milshina N.V."/>
            <person name="Mobarry C."/>
            <person name="Morris J."/>
            <person name="Moshrefi A."/>
            <person name="Mount S.M."/>
            <person name="Moy M."/>
            <person name="Murphy B."/>
            <person name="Murphy L."/>
            <person name="Muzny D.M."/>
            <person name="Nelson D.L."/>
            <person name="Nelson D.R."/>
            <person name="Nelson K.A."/>
            <person name="Nixon K."/>
            <person name="Nusskern D.R."/>
            <person name="Pacleb J.M."/>
            <person name="Palazzolo M."/>
            <person name="Pittman G.S."/>
            <person name="Pan S."/>
            <person name="Pollard J."/>
            <person name="Puri V."/>
            <person name="Reese M.G."/>
            <person name="Reinert K."/>
            <person name="Remington K."/>
            <person name="Saunders R.D.C."/>
            <person name="Scheeler F."/>
            <person name="Shen H."/>
            <person name="Shue B.C."/>
            <person name="Siden-Kiamos I."/>
            <person name="Simpson M."/>
            <person name="Skupski M.P."/>
            <person name="Smith T.J."/>
            <person name="Spier E."/>
            <person name="Spradling A.C."/>
            <person name="Stapleton M."/>
            <person name="Strong R."/>
            <person name="Sun E."/>
            <person name="Svirskas R."/>
            <person name="Tector C."/>
            <person name="Turner R."/>
            <person name="Venter E."/>
            <person name="Wang A.H."/>
            <person name="Wang X."/>
            <person name="Wang Z.-Y."/>
            <person name="Wassarman D.A."/>
            <person name="Weinstock G.M."/>
            <person name="Weissenbach J."/>
            <person name="Williams S.M."/>
            <person name="Woodage T."/>
            <person name="Worley K.C."/>
            <person name="Wu D."/>
            <person name="Yang S."/>
            <person name="Yao Q.A."/>
            <person name="Ye J."/>
            <person name="Yeh R.-F."/>
            <person name="Zaveri J.S."/>
            <person name="Zhan M."/>
            <person name="Zhang G."/>
            <person name="Zhao Q."/>
            <person name="Zheng L."/>
            <person name="Zheng X.H."/>
            <person name="Zhong F.N."/>
            <person name="Zhong W."/>
            <person name="Zhou X."/>
            <person name="Zhu S.C."/>
            <person name="Zhu X."/>
            <person name="Smith H.O."/>
            <person name="Gibbs R.A."/>
            <person name="Myers E.W."/>
            <person name="Rubin G.M."/>
            <person name="Venter J.C."/>
        </authorList>
    </citation>
    <scope>NUCLEOTIDE SEQUENCE [LARGE SCALE GENOMIC DNA]</scope>
    <source>
        <strain>Berkeley</strain>
    </source>
</reference>
<reference key="3">
    <citation type="journal article" date="2002" name="Genome Biol.">
        <title>Annotation of the Drosophila melanogaster euchromatic genome: a systematic review.</title>
        <authorList>
            <person name="Misra S."/>
            <person name="Crosby M.A."/>
            <person name="Mungall C.J."/>
            <person name="Matthews B.B."/>
            <person name="Campbell K.S."/>
            <person name="Hradecky P."/>
            <person name="Huang Y."/>
            <person name="Kaminker J.S."/>
            <person name="Millburn G.H."/>
            <person name="Prochnik S.E."/>
            <person name="Smith C.D."/>
            <person name="Tupy J.L."/>
            <person name="Whitfield E.J."/>
            <person name="Bayraktaroglu L."/>
            <person name="Berman B.P."/>
            <person name="Bettencourt B.R."/>
            <person name="Celniker S.E."/>
            <person name="de Grey A.D.N.J."/>
            <person name="Drysdale R.A."/>
            <person name="Harris N.L."/>
            <person name="Richter J."/>
            <person name="Russo S."/>
            <person name="Schroeder A.J."/>
            <person name="Shu S.Q."/>
            <person name="Stapleton M."/>
            <person name="Yamada C."/>
            <person name="Ashburner M."/>
            <person name="Gelbart W.M."/>
            <person name="Rubin G.M."/>
            <person name="Lewis S.E."/>
        </authorList>
    </citation>
    <scope>GENOME REANNOTATION</scope>
    <source>
        <strain>Berkeley</strain>
    </source>
</reference>
<reference key="4">
    <citation type="journal article" date="2002" name="Genome Biol.">
        <title>A Drosophila full-length cDNA resource.</title>
        <authorList>
            <person name="Stapleton M."/>
            <person name="Carlson J.W."/>
            <person name="Brokstein P."/>
            <person name="Yu C."/>
            <person name="Champe M."/>
            <person name="George R.A."/>
            <person name="Guarin H."/>
            <person name="Kronmiller B."/>
            <person name="Pacleb J.M."/>
            <person name="Park S."/>
            <person name="Wan K.H."/>
            <person name="Rubin G.M."/>
            <person name="Celniker S.E."/>
        </authorList>
    </citation>
    <scope>NUCLEOTIDE SEQUENCE [LARGE SCALE MRNA]</scope>
    <source>
        <strain>Berkeley</strain>
        <tissue>Head</tissue>
    </source>
</reference>
<reference key="5">
    <citation type="journal article" date="1999" name="Development">
        <title>Cell-autonomous and non-autonomous growth-defective mutants of Drosophila melanogaster.</title>
        <authorList>
            <person name="Galloni M."/>
            <person name="Edgar B.A."/>
        </authorList>
    </citation>
    <scope>FUNCTION</scope>
    <scope>TISSUE SPECIFICITY</scope>
</reference>
<evidence type="ECO:0000250" key="1">
    <source>
        <dbReference type="UniProtKB" id="P82913"/>
    </source>
</evidence>
<evidence type="ECO:0000255" key="2"/>
<evidence type="ECO:0000269" key="3">
    <source>
    </source>
</evidence>
<evidence type="ECO:0000269" key="4">
    <source>
    </source>
</evidence>
<evidence type="ECO:0000305" key="5"/>
<sequence>MNKLLNIAQAGHRQFVREYAFKSDLKIKWMRPEKIACYKPEKSGDLAKLPPLKADELLPEYRDCKELDKADESVKSLFKLSNNASYLTTKFYRDEMVKEVQRHAQDFGSMEAKLAKMTAVIRRYQEHMDKHPRDKMIKVRLKELIDKRKKFLKYLRRWDYPRFEWILEKLDLVYKPPPTHFHWITRKESLQKLTDIYCENLKEERLEAYHKQLQAQQIPFLEEAIKKMQFVRQEQISCDVPVTVTEEKIADSKRQLEMLKELQQAEAAASSKKQNEDGFN</sequence>
<protein>
    <recommendedName>
        <fullName evidence="5">Small ribosomal subunit protein uS15m</fullName>
    </recommendedName>
    <alternativeName>
        <fullName>28S ribosomal protein S15, mitochondrial</fullName>
        <shortName>MRP-S15</shortName>
        <shortName>S15mt</shortName>
    </alternativeName>
    <alternativeName>
        <fullName>DmMRPS15</fullName>
    </alternativeName>
    <alternativeName>
        <fullName>Protein bonsai</fullName>
    </alternativeName>
</protein>
<comment type="function">
    <text evidence="3 4">Essential for gut mitochondrial activity. Might be involved in tissue specific growth factor production.</text>
</comment>
<comment type="subunit">
    <text evidence="1">Component of the mitochondrial ribosome small subunit (28S) which comprises a 12S rRNA and about 30 distinct proteins.</text>
</comment>
<comment type="subcellular location">
    <subcellularLocation>
        <location evidence="4">Mitochondrion</location>
    </subcellularLocation>
</comment>
<comment type="tissue specificity">
    <text evidence="3 4">Expressed in anterior and posterior midgut primordia in stage 11 embryos. In stage 13 embryos, expression is high in the developing midgut and hindgut. In stage 16 embryos, expression is elevated in the midgut, hindgut, and in a small region that will give rise to pharyngeal muscles and to the stomatogastric nervous system. In larvae, expression is predominant in the gut, and head, presumably in pharyngeal muscles.</text>
</comment>
<comment type="developmental stage">
    <text>Expressed both maternally and zygotically throughout development, lowest levels are in third larval instar and pupae.</text>
</comment>
<comment type="disruption phenotype">
    <text evidence="4">Mutants exhibit a strong systemic growth defect and die before reaching wild-type size.</text>
</comment>
<comment type="similarity">
    <text evidence="5">Belongs to the universal ribosomal protein uS15 family.</text>
</comment>
<name>RT15_DROME</name>
<feature type="transit peptide" description="Mitochondrion" evidence="2">
    <location>
        <begin position="1"/>
        <end status="unknown"/>
    </location>
</feature>
<feature type="chain" id="PRO_0000030617" description="Small ribosomal subunit protein uS15m">
    <location>
        <begin status="unknown"/>
        <end position="280"/>
    </location>
</feature>
<feature type="sequence conflict" description="In Ref. 1; AAL31972." evidence="5" ref="1">
    <original>M</original>
    <variation>V</variation>
    <location>
        <position position="30"/>
    </location>
</feature>
<feature type="sequence conflict" description="In Ref. 1; AAL31972." evidence="5" ref="1">
    <original>A</original>
    <variation>S</variation>
    <location>
        <position position="47"/>
    </location>
</feature>
<keyword id="KW-0496">Mitochondrion</keyword>
<keyword id="KW-1185">Reference proteome</keyword>
<keyword id="KW-0687">Ribonucleoprotein</keyword>
<keyword id="KW-0689">Ribosomal protein</keyword>
<keyword id="KW-0809">Transit peptide</keyword>
<accession>Q8WTC1</accession>
<accession>Q9W231</accession>
<gene>
    <name type="primary">bonsai</name>
    <name type="synonym">mRpS15</name>
    <name type="ORF">CG4207</name>
</gene>
<organism>
    <name type="scientific">Drosophila melanogaster</name>
    <name type="common">Fruit fly</name>
    <dbReference type="NCBI Taxonomy" id="7227"/>
    <lineage>
        <taxon>Eukaryota</taxon>
        <taxon>Metazoa</taxon>
        <taxon>Ecdysozoa</taxon>
        <taxon>Arthropoda</taxon>
        <taxon>Hexapoda</taxon>
        <taxon>Insecta</taxon>
        <taxon>Pterygota</taxon>
        <taxon>Neoptera</taxon>
        <taxon>Endopterygota</taxon>
        <taxon>Diptera</taxon>
        <taxon>Brachycera</taxon>
        <taxon>Muscomorpha</taxon>
        <taxon>Ephydroidea</taxon>
        <taxon>Drosophilidae</taxon>
        <taxon>Drosophila</taxon>
        <taxon>Sophophora</taxon>
    </lineage>
</organism>